<reference key="1">
    <citation type="journal article" date="1996" name="Plant Cell">
        <title>Distinct classes of cdc2-related genes are differentially expressed during the cell division cycle in plants.</title>
        <authorList>
            <person name="Fobert P.R."/>
            <person name="Gaudin V."/>
            <person name="Lunness P."/>
            <person name="Coen E.S."/>
            <person name="Doonan J.H."/>
        </authorList>
    </citation>
    <scope>NUCLEOTIDE SEQUENCE [MRNA]</scope>
    <source>
        <tissue>Flower</tissue>
    </source>
</reference>
<gene>
    <name type="primary">CDC2C</name>
</gene>
<name>CDC2C_ANTMA</name>
<sequence length="305" mass="34298">MEKYEKLEKVGEGTYGKVYKALEKSTGQVVALKKTRLEMDEEGVPPTALREVSLLQMLSQSLYVVRLLSVEHVDCAKNGKPLLYLVFEYLDTDLKKFIDSHRKGPNPRPLPPQQIQSFLFQLCKGVSHCHAHGVLHRDLKPQNLLLDKDKGVLKIADLGLARAFTVPLKSYTHEIVTLSYRAPEVLLGSSHYSTAVDMSSVGCIFAEMVRRQALFPGDSEFQQLLHIFRLLGTPSDEQWPGVSSLRDWHVYPQWEPQNSAPAVPSLGPDGLDLLTKTLKYDPADRISAKAALDHPYFDTLDKSQF</sequence>
<comment type="function">
    <text>Plays a key role in the control of the eukaryotic cell cycle.</text>
</comment>
<comment type="catalytic activity">
    <reaction>
        <text>L-seryl-[protein] + ATP = O-phospho-L-seryl-[protein] + ADP + H(+)</text>
        <dbReference type="Rhea" id="RHEA:17989"/>
        <dbReference type="Rhea" id="RHEA-COMP:9863"/>
        <dbReference type="Rhea" id="RHEA-COMP:11604"/>
        <dbReference type="ChEBI" id="CHEBI:15378"/>
        <dbReference type="ChEBI" id="CHEBI:29999"/>
        <dbReference type="ChEBI" id="CHEBI:30616"/>
        <dbReference type="ChEBI" id="CHEBI:83421"/>
        <dbReference type="ChEBI" id="CHEBI:456216"/>
        <dbReference type="EC" id="2.7.11.22"/>
    </reaction>
</comment>
<comment type="catalytic activity">
    <reaction>
        <text>L-threonyl-[protein] + ATP = O-phospho-L-threonyl-[protein] + ADP + H(+)</text>
        <dbReference type="Rhea" id="RHEA:46608"/>
        <dbReference type="Rhea" id="RHEA-COMP:11060"/>
        <dbReference type="Rhea" id="RHEA-COMP:11605"/>
        <dbReference type="ChEBI" id="CHEBI:15378"/>
        <dbReference type="ChEBI" id="CHEBI:30013"/>
        <dbReference type="ChEBI" id="CHEBI:30616"/>
        <dbReference type="ChEBI" id="CHEBI:61977"/>
        <dbReference type="ChEBI" id="CHEBI:456216"/>
        <dbReference type="EC" id="2.7.11.22"/>
    </reaction>
</comment>
<comment type="catalytic activity">
    <reaction>
        <text>[DNA-directed RNA polymerase] + ATP = phospho-[DNA-directed RNA polymerase] + ADP + H(+)</text>
        <dbReference type="Rhea" id="RHEA:10216"/>
        <dbReference type="Rhea" id="RHEA-COMP:11321"/>
        <dbReference type="Rhea" id="RHEA-COMP:11322"/>
        <dbReference type="ChEBI" id="CHEBI:15378"/>
        <dbReference type="ChEBI" id="CHEBI:30616"/>
        <dbReference type="ChEBI" id="CHEBI:43176"/>
        <dbReference type="ChEBI" id="CHEBI:68546"/>
        <dbReference type="ChEBI" id="CHEBI:456216"/>
        <dbReference type="EC" id="2.7.11.23"/>
    </reaction>
</comment>
<comment type="developmental stage">
    <text>CDC2C transcripts accumulate during S phase as well as during the G2 and M transition.</text>
</comment>
<comment type="similarity">
    <text evidence="4">Belongs to the protein kinase superfamily. CMGC Ser/Thr protein kinase family. CDC2/CDKX subfamily.</text>
</comment>
<evidence type="ECO:0000250" key="1"/>
<evidence type="ECO:0000255" key="2">
    <source>
        <dbReference type="PROSITE-ProRule" id="PRU00159"/>
    </source>
</evidence>
<evidence type="ECO:0000255" key="3">
    <source>
        <dbReference type="PROSITE-ProRule" id="PRU10027"/>
    </source>
</evidence>
<evidence type="ECO:0000305" key="4"/>
<accession>Q38774</accession>
<keyword id="KW-0067">ATP-binding</keyword>
<keyword id="KW-0131">Cell cycle</keyword>
<keyword id="KW-0132">Cell division</keyword>
<keyword id="KW-0418">Kinase</keyword>
<keyword id="KW-0498">Mitosis</keyword>
<keyword id="KW-0547">Nucleotide-binding</keyword>
<keyword id="KW-0597">Phosphoprotein</keyword>
<keyword id="KW-0723">Serine/threonine-protein kinase</keyword>
<keyword id="KW-0808">Transferase</keyword>
<dbReference type="EC" id="2.7.11.22"/>
<dbReference type="EC" id="2.7.11.23"/>
<dbReference type="EMBL" id="X97639">
    <property type="protein sequence ID" value="CAA66235.1"/>
    <property type="molecule type" value="mRNA"/>
</dbReference>
<dbReference type="PIR" id="T17117">
    <property type="entry name" value="T17117"/>
</dbReference>
<dbReference type="SMR" id="Q38774"/>
<dbReference type="BRENDA" id="2.7.11.22">
    <property type="organism ID" value="376"/>
</dbReference>
<dbReference type="GO" id="GO:0000307">
    <property type="term" value="C:cyclin-dependent protein kinase holoenzyme complex"/>
    <property type="evidence" value="ECO:0007669"/>
    <property type="project" value="TreeGrafter"/>
</dbReference>
<dbReference type="GO" id="GO:0005737">
    <property type="term" value="C:cytoplasm"/>
    <property type="evidence" value="ECO:0007669"/>
    <property type="project" value="TreeGrafter"/>
</dbReference>
<dbReference type="GO" id="GO:0005634">
    <property type="term" value="C:nucleus"/>
    <property type="evidence" value="ECO:0007669"/>
    <property type="project" value="TreeGrafter"/>
</dbReference>
<dbReference type="GO" id="GO:0005524">
    <property type="term" value="F:ATP binding"/>
    <property type="evidence" value="ECO:0007669"/>
    <property type="project" value="UniProtKB-KW"/>
</dbReference>
<dbReference type="GO" id="GO:0030332">
    <property type="term" value="F:cyclin binding"/>
    <property type="evidence" value="ECO:0007669"/>
    <property type="project" value="TreeGrafter"/>
</dbReference>
<dbReference type="GO" id="GO:0004693">
    <property type="term" value="F:cyclin-dependent protein serine/threonine kinase activity"/>
    <property type="evidence" value="ECO:0007669"/>
    <property type="project" value="UniProtKB-EC"/>
</dbReference>
<dbReference type="GO" id="GO:0106310">
    <property type="term" value="F:protein serine kinase activity"/>
    <property type="evidence" value="ECO:0007669"/>
    <property type="project" value="RHEA"/>
</dbReference>
<dbReference type="GO" id="GO:0008353">
    <property type="term" value="F:RNA polymerase II CTD heptapeptide repeat kinase activity"/>
    <property type="evidence" value="ECO:0007669"/>
    <property type="project" value="UniProtKB-EC"/>
</dbReference>
<dbReference type="GO" id="GO:0051301">
    <property type="term" value="P:cell division"/>
    <property type="evidence" value="ECO:0007669"/>
    <property type="project" value="UniProtKB-KW"/>
</dbReference>
<dbReference type="GO" id="GO:0000082">
    <property type="term" value="P:G1/S transition of mitotic cell cycle"/>
    <property type="evidence" value="ECO:0007669"/>
    <property type="project" value="TreeGrafter"/>
</dbReference>
<dbReference type="GO" id="GO:0010389">
    <property type="term" value="P:regulation of G2/M transition of mitotic cell cycle"/>
    <property type="evidence" value="ECO:0007669"/>
    <property type="project" value="TreeGrafter"/>
</dbReference>
<dbReference type="GO" id="GO:0007165">
    <property type="term" value="P:signal transduction"/>
    <property type="evidence" value="ECO:0007669"/>
    <property type="project" value="TreeGrafter"/>
</dbReference>
<dbReference type="FunFam" id="1.10.510.10:FF:000281">
    <property type="entry name" value="Cyclin-dependent kinase 2"/>
    <property type="match status" value="1"/>
</dbReference>
<dbReference type="FunFam" id="3.30.200.20:FF:000231">
    <property type="entry name" value="Cyclin-dependent kinase B2,2"/>
    <property type="match status" value="1"/>
</dbReference>
<dbReference type="Gene3D" id="3.30.200.20">
    <property type="entry name" value="Phosphorylase Kinase, domain 1"/>
    <property type="match status" value="1"/>
</dbReference>
<dbReference type="Gene3D" id="1.10.510.10">
    <property type="entry name" value="Transferase(Phosphotransferase) domain 1"/>
    <property type="match status" value="1"/>
</dbReference>
<dbReference type="InterPro" id="IPR050108">
    <property type="entry name" value="CDK"/>
</dbReference>
<dbReference type="InterPro" id="IPR011009">
    <property type="entry name" value="Kinase-like_dom_sf"/>
</dbReference>
<dbReference type="InterPro" id="IPR000719">
    <property type="entry name" value="Prot_kinase_dom"/>
</dbReference>
<dbReference type="InterPro" id="IPR017441">
    <property type="entry name" value="Protein_kinase_ATP_BS"/>
</dbReference>
<dbReference type="InterPro" id="IPR008271">
    <property type="entry name" value="Ser/Thr_kinase_AS"/>
</dbReference>
<dbReference type="PANTHER" id="PTHR24056">
    <property type="entry name" value="CELL DIVISION PROTEIN KINASE"/>
    <property type="match status" value="1"/>
</dbReference>
<dbReference type="PANTHER" id="PTHR24056:SF254">
    <property type="entry name" value="CYCLIN-DEPENDENT KINASE 2"/>
    <property type="match status" value="1"/>
</dbReference>
<dbReference type="Pfam" id="PF00069">
    <property type="entry name" value="Pkinase"/>
    <property type="match status" value="1"/>
</dbReference>
<dbReference type="SMART" id="SM00220">
    <property type="entry name" value="S_TKc"/>
    <property type="match status" value="1"/>
</dbReference>
<dbReference type="SUPFAM" id="SSF56112">
    <property type="entry name" value="Protein kinase-like (PK-like)"/>
    <property type="match status" value="1"/>
</dbReference>
<dbReference type="PROSITE" id="PS00107">
    <property type="entry name" value="PROTEIN_KINASE_ATP"/>
    <property type="match status" value="1"/>
</dbReference>
<dbReference type="PROSITE" id="PS50011">
    <property type="entry name" value="PROTEIN_KINASE_DOM"/>
    <property type="match status" value="1"/>
</dbReference>
<dbReference type="PROSITE" id="PS00108">
    <property type="entry name" value="PROTEIN_KINASE_ST"/>
    <property type="match status" value="1"/>
</dbReference>
<proteinExistence type="evidence at transcript level"/>
<feature type="chain" id="PRO_0000085747" description="Cell division control protein 2 homolog C">
    <location>
        <begin position="1"/>
        <end position="305"/>
    </location>
</feature>
<feature type="domain" description="Protein kinase" evidence="2">
    <location>
        <begin position="4"/>
        <end position="297"/>
    </location>
</feature>
<feature type="active site" description="Proton acceptor" evidence="2 3">
    <location>
        <position position="138"/>
    </location>
</feature>
<feature type="binding site" evidence="2">
    <location>
        <begin position="10"/>
        <end position="18"/>
    </location>
    <ligand>
        <name>ATP</name>
        <dbReference type="ChEBI" id="CHEBI:30616"/>
    </ligand>
</feature>
<feature type="binding site" evidence="2">
    <location>
        <position position="33"/>
    </location>
    <ligand>
        <name>ATP</name>
        <dbReference type="ChEBI" id="CHEBI:30616"/>
    </ligand>
</feature>
<feature type="modified residue" description="Phosphothreonine" evidence="1">
    <location>
        <position position="14"/>
    </location>
</feature>
<feature type="modified residue" description="Phosphotyrosine" evidence="1">
    <location>
        <position position="15"/>
    </location>
</feature>
<feature type="modified residue" description="Phosphothreonine; by CAK" evidence="1">
    <location>
        <position position="172"/>
    </location>
</feature>
<organism>
    <name type="scientific">Antirrhinum majus</name>
    <name type="common">Garden snapdragon</name>
    <dbReference type="NCBI Taxonomy" id="4151"/>
    <lineage>
        <taxon>Eukaryota</taxon>
        <taxon>Viridiplantae</taxon>
        <taxon>Streptophyta</taxon>
        <taxon>Embryophyta</taxon>
        <taxon>Tracheophyta</taxon>
        <taxon>Spermatophyta</taxon>
        <taxon>Magnoliopsida</taxon>
        <taxon>eudicotyledons</taxon>
        <taxon>Gunneridae</taxon>
        <taxon>Pentapetalae</taxon>
        <taxon>asterids</taxon>
        <taxon>lamiids</taxon>
        <taxon>Lamiales</taxon>
        <taxon>Plantaginaceae</taxon>
        <taxon>Antirrhineae</taxon>
        <taxon>Antirrhinum</taxon>
    </lineage>
</organism>
<protein>
    <recommendedName>
        <fullName>Cell division control protein 2 homolog C</fullName>
        <ecNumber>2.7.11.22</ecNumber>
        <ecNumber>2.7.11.23</ecNumber>
    </recommendedName>
</protein>